<comment type="function">
    <text evidence="1">The alpha subunit is responsible for the aldol cleavage of indoleglycerol phosphate to indole and glyceraldehyde 3-phosphate.</text>
</comment>
<comment type="catalytic activity">
    <reaction evidence="1">
        <text>(1S,2R)-1-C-(indol-3-yl)glycerol 3-phosphate + L-serine = D-glyceraldehyde 3-phosphate + L-tryptophan + H2O</text>
        <dbReference type="Rhea" id="RHEA:10532"/>
        <dbReference type="ChEBI" id="CHEBI:15377"/>
        <dbReference type="ChEBI" id="CHEBI:33384"/>
        <dbReference type="ChEBI" id="CHEBI:57912"/>
        <dbReference type="ChEBI" id="CHEBI:58866"/>
        <dbReference type="ChEBI" id="CHEBI:59776"/>
        <dbReference type="EC" id="4.2.1.20"/>
    </reaction>
</comment>
<comment type="pathway">
    <text evidence="1">Amino-acid biosynthesis; L-tryptophan biosynthesis; L-tryptophan from chorismate: step 5/5.</text>
</comment>
<comment type="subunit">
    <text evidence="1">Tetramer of two alpha and two beta chains.</text>
</comment>
<comment type="similarity">
    <text evidence="1">Belongs to the TrpA family.</text>
</comment>
<organism>
    <name type="scientific">Psychrobacter sp. (strain PRwf-1)</name>
    <dbReference type="NCBI Taxonomy" id="349106"/>
    <lineage>
        <taxon>Bacteria</taxon>
        <taxon>Pseudomonadati</taxon>
        <taxon>Pseudomonadota</taxon>
        <taxon>Gammaproteobacteria</taxon>
        <taxon>Moraxellales</taxon>
        <taxon>Moraxellaceae</taxon>
        <taxon>Psychrobacter</taxon>
    </lineage>
</organism>
<proteinExistence type="inferred from homology"/>
<accession>A5WDG7</accession>
<evidence type="ECO:0000255" key="1">
    <source>
        <dbReference type="HAMAP-Rule" id="MF_00131"/>
    </source>
</evidence>
<reference key="1">
    <citation type="submission" date="2007-05" db="EMBL/GenBank/DDBJ databases">
        <title>Complete sequence of chromosome of Psychrobacter sp. PRwf-1.</title>
        <authorList>
            <consortium name="US DOE Joint Genome Institute"/>
            <person name="Copeland A."/>
            <person name="Lucas S."/>
            <person name="Lapidus A."/>
            <person name="Barry K."/>
            <person name="Detter J.C."/>
            <person name="Glavina del Rio T."/>
            <person name="Hammon N."/>
            <person name="Israni S."/>
            <person name="Dalin E."/>
            <person name="Tice H."/>
            <person name="Pitluck S."/>
            <person name="Chain P."/>
            <person name="Malfatti S."/>
            <person name="Shin M."/>
            <person name="Vergez L."/>
            <person name="Schmutz J."/>
            <person name="Larimer F."/>
            <person name="Land M."/>
            <person name="Hauser L."/>
            <person name="Kyrpides N."/>
            <person name="Kim E."/>
            <person name="Tiedje J."/>
            <person name="Richardson P."/>
        </authorList>
    </citation>
    <scope>NUCLEOTIDE SEQUENCE [LARGE SCALE GENOMIC DNA]</scope>
    <source>
        <strain>PRwf-1</strain>
    </source>
</reference>
<dbReference type="EC" id="4.2.1.20" evidence="1"/>
<dbReference type="EMBL" id="CP000713">
    <property type="protein sequence ID" value="ABQ93708.1"/>
    <property type="molecule type" value="Genomic_DNA"/>
</dbReference>
<dbReference type="SMR" id="A5WDG7"/>
<dbReference type="STRING" id="349106.PsycPRwf_0756"/>
<dbReference type="KEGG" id="prw:PsycPRwf_0756"/>
<dbReference type="eggNOG" id="COG0159">
    <property type="taxonomic scope" value="Bacteria"/>
</dbReference>
<dbReference type="HOGENOM" id="CLU_016734_0_0_6"/>
<dbReference type="UniPathway" id="UPA00035">
    <property type="reaction ID" value="UER00044"/>
</dbReference>
<dbReference type="GO" id="GO:0005829">
    <property type="term" value="C:cytosol"/>
    <property type="evidence" value="ECO:0007669"/>
    <property type="project" value="TreeGrafter"/>
</dbReference>
<dbReference type="GO" id="GO:0004834">
    <property type="term" value="F:tryptophan synthase activity"/>
    <property type="evidence" value="ECO:0007669"/>
    <property type="project" value="UniProtKB-UniRule"/>
</dbReference>
<dbReference type="CDD" id="cd04724">
    <property type="entry name" value="Tryptophan_synthase_alpha"/>
    <property type="match status" value="1"/>
</dbReference>
<dbReference type="FunFam" id="3.20.20.70:FF:000037">
    <property type="entry name" value="Tryptophan synthase alpha chain"/>
    <property type="match status" value="1"/>
</dbReference>
<dbReference type="Gene3D" id="3.20.20.70">
    <property type="entry name" value="Aldolase class I"/>
    <property type="match status" value="1"/>
</dbReference>
<dbReference type="HAMAP" id="MF_00131">
    <property type="entry name" value="Trp_synth_alpha"/>
    <property type="match status" value="1"/>
</dbReference>
<dbReference type="InterPro" id="IPR013785">
    <property type="entry name" value="Aldolase_TIM"/>
</dbReference>
<dbReference type="InterPro" id="IPR011060">
    <property type="entry name" value="RibuloseP-bd_barrel"/>
</dbReference>
<dbReference type="InterPro" id="IPR018204">
    <property type="entry name" value="Trp_synthase_alpha_AS"/>
</dbReference>
<dbReference type="InterPro" id="IPR002028">
    <property type="entry name" value="Trp_synthase_suA"/>
</dbReference>
<dbReference type="NCBIfam" id="TIGR00262">
    <property type="entry name" value="trpA"/>
    <property type="match status" value="1"/>
</dbReference>
<dbReference type="PANTHER" id="PTHR43406:SF1">
    <property type="entry name" value="TRYPTOPHAN SYNTHASE ALPHA CHAIN, CHLOROPLASTIC"/>
    <property type="match status" value="1"/>
</dbReference>
<dbReference type="PANTHER" id="PTHR43406">
    <property type="entry name" value="TRYPTOPHAN SYNTHASE, ALPHA CHAIN"/>
    <property type="match status" value="1"/>
</dbReference>
<dbReference type="Pfam" id="PF00290">
    <property type="entry name" value="Trp_syntA"/>
    <property type="match status" value="1"/>
</dbReference>
<dbReference type="SUPFAM" id="SSF51366">
    <property type="entry name" value="Ribulose-phoshate binding barrel"/>
    <property type="match status" value="1"/>
</dbReference>
<dbReference type="PROSITE" id="PS00167">
    <property type="entry name" value="TRP_SYNTHASE_ALPHA"/>
    <property type="match status" value="1"/>
</dbReference>
<gene>
    <name evidence="1" type="primary">trpA</name>
    <name type="ordered locus">PsycPRwf_0756</name>
</gene>
<name>TRPA_PSYWF</name>
<sequence>MTRIESTFETLKAQNKKALIPYVMAGDPSPNSFVDLLHDLVKHGADMIEVGLPFSDPMADGPTVALAGERALAGGTSTHQALAIVKKFREQDSSTPIILMGYLNPIEIIGYEAFIALCHESGVDGVLVVDLPPAESGNFVERLAAHDINKIFLLSPTTLPERRKQVMTHCGGYIYYVSLKGVTGSASLDTQAVGEQVQAIKQETNLPICVGFGIRDGQSAAAIGQYADGVIVGSELVKNFSGLSHTSRAEDIATAQASIMTKMDELRQALDALSA</sequence>
<keyword id="KW-0028">Amino-acid biosynthesis</keyword>
<keyword id="KW-0057">Aromatic amino acid biosynthesis</keyword>
<keyword id="KW-0456">Lyase</keyword>
<keyword id="KW-0822">Tryptophan biosynthesis</keyword>
<protein>
    <recommendedName>
        <fullName evidence="1">Tryptophan synthase alpha chain</fullName>
        <ecNumber evidence="1">4.2.1.20</ecNumber>
    </recommendedName>
</protein>
<feature type="chain" id="PRO_1000071424" description="Tryptophan synthase alpha chain">
    <location>
        <begin position="1"/>
        <end position="275"/>
    </location>
</feature>
<feature type="active site" description="Proton acceptor" evidence="1">
    <location>
        <position position="49"/>
    </location>
</feature>
<feature type="active site" description="Proton acceptor" evidence="1">
    <location>
        <position position="60"/>
    </location>
</feature>